<accession>Q41142</accession>
<accession>P93507</accession>
<proteinExistence type="evidence at protein level"/>
<reference key="1">
    <citation type="journal article" date="1994" name="J. Biol. Chem.">
        <title>Cloning and expression of phosphatidylcholine-hydrolyzing phospholipase D from Ricinus communis L.</title>
        <authorList>
            <person name="Wang X."/>
            <person name="Xu L."/>
            <person name="Zheng L."/>
        </authorList>
    </citation>
    <scope>NUCLEOTIDE SEQUENCE [MRNA]</scope>
    <scope>PROTEIN SEQUENCE OF 30-55</scope>
    <source>
        <strain>cv. Hale</strain>
        <tissue>Endosperm</tissue>
    </source>
</reference>
<reference key="2">
    <citation type="journal article" date="1996" name="Plant Mol. Biol.">
        <title>Structure and analysis of phospholipase D gene from Ricinus communis L.</title>
        <authorList>
            <person name="Xu L."/>
            <person name="Zheng L."/>
            <person name="Coughlan S.J."/>
            <person name="Wang X."/>
        </authorList>
    </citation>
    <scope>NUCLEOTIDE SEQUENCE [GENOMIC DNA]</scope>
    <source>
        <tissue>Leaf</tissue>
    </source>
</reference>
<dbReference type="EC" id="3.1.4.4"/>
<dbReference type="EMBL" id="L33686">
    <property type="protein sequence ID" value="AAB04095.1"/>
    <property type="molecule type" value="mRNA"/>
</dbReference>
<dbReference type="EMBL" id="U72693">
    <property type="protein sequence ID" value="AAB37305.1"/>
    <property type="molecule type" value="Genomic_DNA"/>
</dbReference>
<dbReference type="PIR" id="T10171">
    <property type="entry name" value="T10171"/>
</dbReference>
<dbReference type="RefSeq" id="NP_001310687.1">
    <property type="nucleotide sequence ID" value="NM_001323758.1"/>
</dbReference>
<dbReference type="SMR" id="Q41142"/>
<dbReference type="GeneID" id="8282326"/>
<dbReference type="KEGG" id="rcu:8282326"/>
<dbReference type="eggNOG" id="KOG1329">
    <property type="taxonomic scope" value="Eukaryota"/>
</dbReference>
<dbReference type="OMA" id="PNWGRGI"/>
<dbReference type="OrthoDB" id="14911at2759"/>
<dbReference type="GO" id="GO:0005783">
    <property type="term" value="C:endoplasmic reticulum"/>
    <property type="evidence" value="ECO:0007669"/>
    <property type="project" value="UniProtKB-SubCell"/>
</dbReference>
<dbReference type="GO" id="GO:0005886">
    <property type="term" value="C:plasma membrane"/>
    <property type="evidence" value="ECO:0007669"/>
    <property type="project" value="UniProtKB-SubCell"/>
</dbReference>
<dbReference type="GO" id="GO:0009536">
    <property type="term" value="C:plastid"/>
    <property type="evidence" value="ECO:0007669"/>
    <property type="project" value="UniProtKB-SubCell"/>
</dbReference>
<dbReference type="GO" id="GO:0005773">
    <property type="term" value="C:vacuole"/>
    <property type="evidence" value="ECO:0007669"/>
    <property type="project" value="UniProtKB-SubCell"/>
</dbReference>
<dbReference type="GO" id="GO:0005509">
    <property type="term" value="F:calcium ion binding"/>
    <property type="evidence" value="ECO:0007669"/>
    <property type="project" value="InterPro"/>
</dbReference>
<dbReference type="GO" id="GO:0004630">
    <property type="term" value="F:phospholipase D activity"/>
    <property type="evidence" value="ECO:0007669"/>
    <property type="project" value="UniProtKB-EC"/>
</dbReference>
<dbReference type="GO" id="GO:0016042">
    <property type="term" value="P:lipid catabolic process"/>
    <property type="evidence" value="ECO:0007669"/>
    <property type="project" value="UniProtKB-KW"/>
</dbReference>
<dbReference type="GO" id="GO:0046470">
    <property type="term" value="P:phosphatidylcholine metabolic process"/>
    <property type="evidence" value="ECO:0007669"/>
    <property type="project" value="InterPro"/>
</dbReference>
<dbReference type="CDD" id="cd04015">
    <property type="entry name" value="C2_plant_PLD"/>
    <property type="match status" value="1"/>
</dbReference>
<dbReference type="CDD" id="cd09197">
    <property type="entry name" value="PLDc_pPLDalpha_1"/>
    <property type="match status" value="1"/>
</dbReference>
<dbReference type="CDD" id="cd09199">
    <property type="entry name" value="PLDc_pPLDalpha_2"/>
    <property type="match status" value="1"/>
</dbReference>
<dbReference type="FunFam" id="3.30.870.10:FF:000027">
    <property type="entry name" value="Phospholipase D"/>
    <property type="match status" value="1"/>
</dbReference>
<dbReference type="FunFam" id="3.30.870.10:FF:000025">
    <property type="entry name" value="Phospholipase D delta"/>
    <property type="match status" value="1"/>
</dbReference>
<dbReference type="Gene3D" id="2.60.40.150">
    <property type="entry name" value="C2 domain"/>
    <property type="match status" value="1"/>
</dbReference>
<dbReference type="Gene3D" id="3.30.870.10">
    <property type="entry name" value="Endonuclease Chain A"/>
    <property type="match status" value="2"/>
</dbReference>
<dbReference type="InterPro" id="IPR000008">
    <property type="entry name" value="C2_dom"/>
</dbReference>
<dbReference type="InterPro" id="IPR035892">
    <property type="entry name" value="C2_domain_sf"/>
</dbReference>
<dbReference type="InterPro" id="IPR001736">
    <property type="entry name" value="PLipase_D/transphosphatidylase"/>
</dbReference>
<dbReference type="InterPro" id="IPR024632">
    <property type="entry name" value="PLipase_D_C"/>
</dbReference>
<dbReference type="InterPro" id="IPR015679">
    <property type="entry name" value="PLipase_D_fam"/>
</dbReference>
<dbReference type="InterPro" id="IPR011402">
    <property type="entry name" value="PLipase_D_pln"/>
</dbReference>
<dbReference type="PANTHER" id="PTHR18896">
    <property type="entry name" value="PHOSPHOLIPASE D"/>
    <property type="match status" value="1"/>
</dbReference>
<dbReference type="PANTHER" id="PTHR18896:SF115">
    <property type="entry name" value="PHOSPHOLIPASE D ALPHA 1"/>
    <property type="match status" value="1"/>
</dbReference>
<dbReference type="Pfam" id="PF00168">
    <property type="entry name" value="C2"/>
    <property type="match status" value="1"/>
</dbReference>
<dbReference type="Pfam" id="PF12357">
    <property type="entry name" value="PLD_C"/>
    <property type="match status" value="1"/>
</dbReference>
<dbReference type="Pfam" id="PF00614">
    <property type="entry name" value="PLDc"/>
    <property type="match status" value="2"/>
</dbReference>
<dbReference type="PIRSF" id="PIRSF036470">
    <property type="entry name" value="PLD_plant"/>
    <property type="match status" value="1"/>
</dbReference>
<dbReference type="SMART" id="SM00239">
    <property type="entry name" value="C2"/>
    <property type="match status" value="1"/>
</dbReference>
<dbReference type="SMART" id="SM00155">
    <property type="entry name" value="PLDc"/>
    <property type="match status" value="2"/>
</dbReference>
<dbReference type="SUPFAM" id="SSF49562">
    <property type="entry name" value="C2 domain (Calcium/lipid-binding domain, CaLB)"/>
    <property type="match status" value="1"/>
</dbReference>
<dbReference type="SUPFAM" id="SSF56024">
    <property type="entry name" value="Phospholipase D/nuclease"/>
    <property type="match status" value="2"/>
</dbReference>
<dbReference type="PROSITE" id="PS50004">
    <property type="entry name" value="C2"/>
    <property type="match status" value="1"/>
</dbReference>
<dbReference type="PROSITE" id="PS50035">
    <property type="entry name" value="PLD"/>
    <property type="match status" value="2"/>
</dbReference>
<name>PLDA1_RICCO</name>
<evidence type="ECO:0000250" key="1"/>
<evidence type="ECO:0000250" key="2">
    <source>
        <dbReference type="UniProtKB" id="Q38882"/>
    </source>
</evidence>
<evidence type="ECO:0000255" key="3">
    <source>
        <dbReference type="PROSITE-ProRule" id="PRU00041"/>
    </source>
</evidence>
<evidence type="ECO:0000255" key="4">
    <source>
        <dbReference type="PROSITE-ProRule" id="PRU00153"/>
    </source>
</evidence>
<evidence type="ECO:0000305" key="5"/>
<organism>
    <name type="scientific">Ricinus communis</name>
    <name type="common">Castor bean</name>
    <dbReference type="NCBI Taxonomy" id="3988"/>
    <lineage>
        <taxon>Eukaryota</taxon>
        <taxon>Viridiplantae</taxon>
        <taxon>Streptophyta</taxon>
        <taxon>Embryophyta</taxon>
        <taxon>Tracheophyta</taxon>
        <taxon>Spermatophyta</taxon>
        <taxon>Magnoliopsida</taxon>
        <taxon>eudicotyledons</taxon>
        <taxon>Gunneridae</taxon>
        <taxon>Pentapetalae</taxon>
        <taxon>rosids</taxon>
        <taxon>fabids</taxon>
        <taxon>Malpighiales</taxon>
        <taxon>Euphorbiaceae</taxon>
        <taxon>Acalyphoideae</taxon>
        <taxon>Acalypheae</taxon>
        <taxon>Ricinus</taxon>
    </lineage>
</organism>
<feature type="propeptide" id="PRO_0000024653">
    <location>
        <begin position="1"/>
        <end position="30"/>
    </location>
</feature>
<feature type="chain" id="PRO_0000024654" description="Phospholipase D alpha 1">
    <location>
        <begin position="31"/>
        <end position="808"/>
    </location>
</feature>
<feature type="domain" description="C2" evidence="3">
    <location>
        <begin position="1"/>
        <end position="125"/>
    </location>
</feature>
<feature type="domain" description="PLD phosphodiesterase 1" evidence="4">
    <location>
        <begin position="326"/>
        <end position="364"/>
    </location>
</feature>
<feature type="domain" description="PLD phosphodiesterase 2" evidence="4">
    <location>
        <begin position="654"/>
        <end position="681"/>
    </location>
</feature>
<feature type="active site" evidence="4">
    <location>
        <position position="331"/>
    </location>
</feature>
<feature type="active site" evidence="4">
    <location>
        <position position="333"/>
    </location>
</feature>
<feature type="active site" evidence="4">
    <location>
        <position position="338"/>
    </location>
</feature>
<feature type="active site" evidence="4">
    <location>
        <position position="659"/>
    </location>
</feature>
<feature type="active site" evidence="4">
    <location>
        <position position="661"/>
    </location>
</feature>
<feature type="active site" evidence="4">
    <location>
        <position position="666"/>
    </location>
</feature>
<feature type="binding site" evidence="2">
    <location>
        <position position="186"/>
    </location>
    <ligand>
        <name>Ca(2+)</name>
        <dbReference type="ChEBI" id="CHEBI:29108"/>
    </ligand>
</feature>
<feature type="binding site" evidence="2">
    <location>
        <position position="331"/>
    </location>
    <ligand>
        <name>a 1,2-diacyl-sn-glycero-3-phosphate</name>
        <dbReference type="ChEBI" id="CHEBI:58608"/>
    </ligand>
</feature>
<feature type="binding site" evidence="2">
    <location>
        <position position="370"/>
    </location>
    <ligand>
        <name>Ca(2+)</name>
        <dbReference type="ChEBI" id="CHEBI:29108"/>
    </ligand>
</feature>
<feature type="binding site" evidence="2">
    <location>
        <position position="404"/>
    </location>
    <ligand>
        <name>Ca(2+)</name>
        <dbReference type="ChEBI" id="CHEBI:29108"/>
    </ligand>
</feature>
<feature type="binding site" evidence="2">
    <location>
        <position position="520"/>
    </location>
    <ligand>
        <name>a 1,2-diacyl-sn-glycero-3-phosphate</name>
        <dbReference type="ChEBI" id="CHEBI:58608"/>
    </ligand>
</feature>
<feature type="binding site" evidence="2">
    <location>
        <position position="659"/>
    </location>
    <ligand>
        <name>a 1,2-diacyl-sn-glycero-3-phosphate</name>
        <dbReference type="ChEBI" id="CHEBI:58608"/>
    </ligand>
</feature>
<feature type="binding site" evidence="2">
    <location>
        <position position="720"/>
    </location>
    <ligand>
        <name>Ca(2+)</name>
        <dbReference type="ChEBI" id="CHEBI:29108"/>
    </ligand>
</feature>
<feature type="sequence conflict" description="In Ref. 2; AAB37305." evidence="5" ref="2">
    <original>L</original>
    <variation>I</variation>
    <location>
        <position position="268"/>
    </location>
</feature>
<gene>
    <name type="primary">PLD1</name>
</gene>
<sequence>MAQISLHGTLHVTIYEVDKLHSGGGPHFFRKLVENIEETVGFGKGVSKLYATIDLEKARVGRTRILENEQSNPRWYESFHVYCAHQASNVIFTVKDDNPIGATLIGRAYVPVEELLDGEEIDRWVEILDEDKNPVHSGSKIHVKLQYFEVTKDRNWGQGIRSSKYPGVPYTYFSQRQGCKVSLYQDAHIPDKFVPQIPLAGGNYYEPHRCWEDVFDAITNAKHLIYITGWSVYTEISLIRDSRRPKPGGDITLGELLKKKASEGVRVLMLVWDDRTSVGLLKKDGLMATHDEETEHFFQNTDVHCVLCPRNPDDGGSFVQDLQISTMFTHHQKIVVVDSAMPNGDSQRRRIVSFVGGLDLCDGRYDSPFHSLFRTLDSAHHDDFHQPNFAGASIEKGGPREPWHDIHSRLEGPIAWDVLFNFEQRWRKQGGKDLLIQLRELEDVIIPPSPVMYPDDFEAWNVQLFRSIDGGAAFGFPETPEDAPEAGLVSGKDNIIDRSIQDAYIHAIRRAKNFIYIENQYFLGSSFGWSPDGIKPEDINALHLIPKELSLKILSKIAAGERFTVYIVVPMWPEGIPESASVQAILDWQKRTMEMMYKDIVQALKANGIIEDPRNYLTFFCLGNREVKKSGEYEPAEKPEPDTDYIRAQEARRFMIYVHTKMMIVDDEYIIIGSANINQRSMDGARDSEIAMGAYQPHHLSTRQPARGQIHGFRMSLWYEHLGMLDESFLNPESEECVRKVNQMAEKYWDLYSSETLEHDLPGHLLRYPIGVASEGDVTELPGTEFFPDTKARVLGAKSDYLPPILTT</sequence>
<protein>
    <recommendedName>
        <fullName>Phospholipase D alpha 1</fullName>
        <shortName>PLD 1</shortName>
        <ecNumber>3.1.4.4</ecNumber>
    </recommendedName>
    <alternativeName>
        <fullName>Choline phosphatase 1</fullName>
    </alternativeName>
    <alternativeName>
        <fullName>Phosphatidylcholine-hydrolyzing phospholipase D 1</fullName>
    </alternativeName>
</protein>
<keyword id="KW-0106">Calcium</keyword>
<keyword id="KW-1003">Cell membrane</keyword>
<keyword id="KW-0963">Cytoplasm</keyword>
<keyword id="KW-0903">Direct protein sequencing</keyword>
<keyword id="KW-0256">Endoplasmic reticulum</keyword>
<keyword id="KW-0378">Hydrolase</keyword>
<keyword id="KW-0442">Lipid degradation</keyword>
<keyword id="KW-0443">Lipid metabolism</keyword>
<keyword id="KW-0472">Membrane</keyword>
<keyword id="KW-0479">Metal-binding</keyword>
<keyword id="KW-0934">Plastid</keyword>
<keyword id="KW-0677">Repeat</keyword>
<keyword id="KW-0926">Vacuole</keyword>
<comment type="function">
    <text>Hydrolyzes glycerol-phospholipids at the terminal phosphodiesteric bond. Plays an important role in various cellular processes, including phytohormone action, vesicular trafficking, secretion, cytoskeletal arrangement, meiosis, tumor promotion, pathogenesis, membrane deterioration and senescence.</text>
</comment>
<comment type="catalytic activity">
    <reaction>
        <text>a 1,2-diacyl-sn-glycero-3-phosphocholine + H2O = a 1,2-diacyl-sn-glycero-3-phosphate + choline + H(+)</text>
        <dbReference type="Rhea" id="RHEA:14445"/>
        <dbReference type="ChEBI" id="CHEBI:15354"/>
        <dbReference type="ChEBI" id="CHEBI:15377"/>
        <dbReference type="ChEBI" id="CHEBI:15378"/>
        <dbReference type="ChEBI" id="CHEBI:57643"/>
        <dbReference type="ChEBI" id="CHEBI:58608"/>
        <dbReference type="EC" id="3.1.4.4"/>
    </reaction>
</comment>
<comment type="cofactor">
    <cofactor>
        <name>Ca(2+)</name>
        <dbReference type="ChEBI" id="CHEBI:29108"/>
    </cofactor>
    <text>Ca(2+) requirement for activity depends on pH. Active either under acidic conditions with micromolar levels of calcium (PIP2-dependent) or at neutral pH with millimolar levels of calcium (PIP2-independent).</text>
</comment>
<comment type="subcellular location">
    <subcellularLocation>
        <location evidence="1">Cytoplasm</location>
    </subcellularLocation>
    <subcellularLocation>
        <location evidence="1">Membrane</location>
        <topology evidence="1">Peripheral membrane protein</topology>
    </subcellularLocation>
    <subcellularLocation>
        <location>Vacuole</location>
    </subcellularLocation>
    <subcellularLocation>
        <location>Endoplasmic reticulum</location>
    </subcellularLocation>
    <subcellularLocation>
        <location>Plastid</location>
    </subcellularLocation>
    <subcellularLocation>
        <location>Cell membrane</location>
    </subcellularLocation>
</comment>
<comment type="tissue specificity">
    <text>Expression is higher in radicle than in endosperm.</text>
</comment>
<comment type="domain">
    <text>C2 domain is a calcium-binding fold, and the binding promotes the protein association with membranes. A lower affinity toward calcium can be anticipated for PLD alpha due to the absence of two potential calcium ligands.</text>
</comment>
<comment type="miscellaneous">
    <text>The propeptide appears to play a key role in the proper folding and activation of the enzyme.</text>
</comment>
<comment type="similarity">
    <text evidence="5">Belongs to the phospholipase D family. C2-PLD subfamily.</text>
</comment>